<keyword id="KW-0030">Aminoacyl-tRNA synthetase</keyword>
<keyword id="KW-0067">ATP-binding</keyword>
<keyword id="KW-0963">Cytoplasm</keyword>
<keyword id="KW-0436">Ligase</keyword>
<keyword id="KW-0547">Nucleotide-binding</keyword>
<keyword id="KW-0648">Protein biosynthesis</keyword>
<reference key="1">
    <citation type="journal article" date="2008" name="BMC Genomics">
        <title>The genome sequence of the fish pathogen Aliivibrio salmonicida strain LFI1238 shows extensive evidence of gene decay.</title>
        <authorList>
            <person name="Hjerde E."/>
            <person name="Lorentzen M.S."/>
            <person name="Holden M.T."/>
            <person name="Seeger K."/>
            <person name="Paulsen S."/>
            <person name="Bason N."/>
            <person name="Churcher C."/>
            <person name="Harris D."/>
            <person name="Norbertczak H."/>
            <person name="Quail M.A."/>
            <person name="Sanders S."/>
            <person name="Thurston S."/>
            <person name="Parkhill J."/>
            <person name="Willassen N.P."/>
            <person name="Thomson N.R."/>
        </authorList>
    </citation>
    <scope>NUCLEOTIDE SEQUENCE [LARGE SCALE GENOMIC DNA]</scope>
    <source>
        <strain>LFI1238</strain>
    </source>
</reference>
<proteinExistence type="inferred from homology"/>
<protein>
    <recommendedName>
        <fullName evidence="1">Leucine--tRNA ligase</fullName>
        <ecNumber evidence="1">6.1.1.4</ecNumber>
    </recommendedName>
    <alternativeName>
        <fullName evidence="1">Leucyl-tRNA synthetase</fullName>
        <shortName evidence="1">LeuRS</shortName>
    </alternativeName>
</protein>
<accession>B6EIN2</accession>
<feature type="chain" id="PRO_1000091284" description="Leucine--tRNA ligase">
    <location>
        <begin position="1"/>
        <end position="858"/>
    </location>
</feature>
<feature type="short sequence motif" description="'HIGH' region">
    <location>
        <begin position="42"/>
        <end position="52"/>
    </location>
</feature>
<feature type="short sequence motif" description="'KMSKS' region">
    <location>
        <begin position="618"/>
        <end position="622"/>
    </location>
</feature>
<feature type="binding site" evidence="1">
    <location>
        <position position="621"/>
    </location>
    <ligand>
        <name>ATP</name>
        <dbReference type="ChEBI" id="CHEBI:30616"/>
    </ligand>
</feature>
<gene>
    <name evidence="1" type="primary">leuS</name>
    <name type="ordered locus">VSAL_I0990</name>
</gene>
<evidence type="ECO:0000255" key="1">
    <source>
        <dbReference type="HAMAP-Rule" id="MF_00049"/>
    </source>
</evidence>
<sequence length="858" mass="96816">MQEQYNPQDLEQKIQKHWDDSKTFVVTEDASKEKFYCLSMFPYPSGRLHMGHVRNYTIGDVVSRYQRLQGKNVMQPIGWDAFGLPAENAAVKNKTAPAPWTYENIEYMKNQLKLLGFGYDWSREFATCTPEYYRWEQEFFTKLYNKGLVYKKTSSVNWCPNDQTVLANEQVEDGCCWRCDTPVEQKKIPQWFIKITEYAQELLDDLDTLDGWPDMVKTMQRNWIGRSEGVELSFAVNGEEAPLEVYTTRPDTLMGVTYVGIAAGHPLAEQAAAKNPELFAFTEECRNTKVAEAELATMEKKGMDTGLRAIHPLNGREVPIYVANFVLMDYGTGAVMAVPAHDQRDYEFATKYGLDIIPVIKPEDGSDVDVSDVAYTEKGVLFDSGEFDGLAFQDAFDAIAAKLEAEGKGKKTVNFRLRDWGVSRQRYWGAPIPMVTTEDGEVHPVPADQLPVILPEDVVMDGVTSPIKADKEWAKTTFNGEPALRETDTFDTFMESSWYYARYCSPQADDILDPEKANYWLPVDQYVGGIEHACMHLLYSRFFHKLLRDAGYVTSNEPFKQLLCQGMVLSDAFHHTNEKGTKEWIAPTDVTIERDAKGRIEKAVDDQGREVQHSGMIKMSKSKNNGIDPQEMVDKFGADTVRLFMMFAAPADMTLEWQESGVEGASRFLKRVWKLVHEHTTKGTTEALDVAALSGDQKALRRDVHKTIAKVSDDIGRRQTFNTAIAAIMELMNKLNKAPQGSAQDRALLDEALKAVVVMLYPMTPHASFAMWEALGESNIDTTAWPTFDEKALIEDEKTIVVMINGKLRAKLIVAADATEEQVKELGLNDENALKFLDGLTIRKVIYVPGKLLNIVAN</sequence>
<comment type="catalytic activity">
    <reaction evidence="1">
        <text>tRNA(Leu) + L-leucine + ATP = L-leucyl-tRNA(Leu) + AMP + diphosphate</text>
        <dbReference type="Rhea" id="RHEA:11688"/>
        <dbReference type="Rhea" id="RHEA-COMP:9613"/>
        <dbReference type="Rhea" id="RHEA-COMP:9622"/>
        <dbReference type="ChEBI" id="CHEBI:30616"/>
        <dbReference type="ChEBI" id="CHEBI:33019"/>
        <dbReference type="ChEBI" id="CHEBI:57427"/>
        <dbReference type="ChEBI" id="CHEBI:78442"/>
        <dbReference type="ChEBI" id="CHEBI:78494"/>
        <dbReference type="ChEBI" id="CHEBI:456215"/>
        <dbReference type="EC" id="6.1.1.4"/>
    </reaction>
</comment>
<comment type="subcellular location">
    <subcellularLocation>
        <location evidence="1">Cytoplasm</location>
    </subcellularLocation>
</comment>
<comment type="similarity">
    <text evidence="1">Belongs to the class-I aminoacyl-tRNA synthetase family.</text>
</comment>
<name>SYL_ALISL</name>
<organism>
    <name type="scientific">Aliivibrio salmonicida (strain LFI1238)</name>
    <name type="common">Vibrio salmonicida (strain LFI1238)</name>
    <dbReference type="NCBI Taxonomy" id="316275"/>
    <lineage>
        <taxon>Bacteria</taxon>
        <taxon>Pseudomonadati</taxon>
        <taxon>Pseudomonadota</taxon>
        <taxon>Gammaproteobacteria</taxon>
        <taxon>Vibrionales</taxon>
        <taxon>Vibrionaceae</taxon>
        <taxon>Aliivibrio</taxon>
    </lineage>
</organism>
<dbReference type="EC" id="6.1.1.4" evidence="1"/>
<dbReference type="EMBL" id="FM178379">
    <property type="protein sequence ID" value="CAQ78675.1"/>
    <property type="molecule type" value="Genomic_DNA"/>
</dbReference>
<dbReference type="RefSeq" id="WP_012549754.1">
    <property type="nucleotide sequence ID" value="NC_011312.1"/>
</dbReference>
<dbReference type="SMR" id="B6EIN2"/>
<dbReference type="KEGG" id="vsa:VSAL_I0990"/>
<dbReference type="eggNOG" id="COG0495">
    <property type="taxonomic scope" value="Bacteria"/>
</dbReference>
<dbReference type="HOGENOM" id="CLU_004427_0_0_6"/>
<dbReference type="Proteomes" id="UP000001730">
    <property type="component" value="Chromosome 1"/>
</dbReference>
<dbReference type="GO" id="GO:0005829">
    <property type="term" value="C:cytosol"/>
    <property type="evidence" value="ECO:0007669"/>
    <property type="project" value="TreeGrafter"/>
</dbReference>
<dbReference type="GO" id="GO:0002161">
    <property type="term" value="F:aminoacyl-tRNA deacylase activity"/>
    <property type="evidence" value="ECO:0007669"/>
    <property type="project" value="InterPro"/>
</dbReference>
<dbReference type="GO" id="GO:0005524">
    <property type="term" value="F:ATP binding"/>
    <property type="evidence" value="ECO:0007669"/>
    <property type="project" value="UniProtKB-UniRule"/>
</dbReference>
<dbReference type="GO" id="GO:0004823">
    <property type="term" value="F:leucine-tRNA ligase activity"/>
    <property type="evidence" value="ECO:0007669"/>
    <property type="project" value="UniProtKB-UniRule"/>
</dbReference>
<dbReference type="GO" id="GO:0006429">
    <property type="term" value="P:leucyl-tRNA aminoacylation"/>
    <property type="evidence" value="ECO:0007669"/>
    <property type="project" value="UniProtKB-UniRule"/>
</dbReference>
<dbReference type="CDD" id="cd07958">
    <property type="entry name" value="Anticodon_Ia_Leu_BEm"/>
    <property type="match status" value="1"/>
</dbReference>
<dbReference type="CDD" id="cd00812">
    <property type="entry name" value="LeuRS_core"/>
    <property type="match status" value="1"/>
</dbReference>
<dbReference type="FunFam" id="1.10.730.10:FF:000002">
    <property type="entry name" value="Leucine--tRNA ligase"/>
    <property type="match status" value="1"/>
</dbReference>
<dbReference type="FunFam" id="2.20.28.290:FF:000001">
    <property type="entry name" value="Leucine--tRNA ligase"/>
    <property type="match status" value="1"/>
</dbReference>
<dbReference type="FunFam" id="3.10.20.590:FF:000001">
    <property type="entry name" value="Leucine--tRNA ligase"/>
    <property type="match status" value="1"/>
</dbReference>
<dbReference type="FunFam" id="3.40.50.620:FF:000003">
    <property type="entry name" value="Leucine--tRNA ligase"/>
    <property type="match status" value="1"/>
</dbReference>
<dbReference type="FunFam" id="3.40.50.620:FF:000051">
    <property type="entry name" value="Leucine--tRNA ligase"/>
    <property type="match status" value="1"/>
</dbReference>
<dbReference type="FunFam" id="3.90.740.10:FF:000012">
    <property type="entry name" value="Leucine--tRNA ligase"/>
    <property type="match status" value="1"/>
</dbReference>
<dbReference type="Gene3D" id="2.20.28.290">
    <property type="match status" value="1"/>
</dbReference>
<dbReference type="Gene3D" id="3.10.20.590">
    <property type="match status" value="1"/>
</dbReference>
<dbReference type="Gene3D" id="3.40.50.620">
    <property type="entry name" value="HUPs"/>
    <property type="match status" value="2"/>
</dbReference>
<dbReference type="Gene3D" id="1.10.730.10">
    <property type="entry name" value="Isoleucyl-tRNA Synthetase, Domain 1"/>
    <property type="match status" value="1"/>
</dbReference>
<dbReference type="Gene3D" id="3.90.740.10">
    <property type="entry name" value="Valyl/Leucyl/Isoleucyl-tRNA synthetase, editing domain"/>
    <property type="match status" value="1"/>
</dbReference>
<dbReference type="HAMAP" id="MF_00049_B">
    <property type="entry name" value="Leu_tRNA_synth_B"/>
    <property type="match status" value="1"/>
</dbReference>
<dbReference type="InterPro" id="IPR001412">
    <property type="entry name" value="aa-tRNA-synth_I_CS"/>
</dbReference>
<dbReference type="InterPro" id="IPR002300">
    <property type="entry name" value="aa-tRNA-synth_Ia"/>
</dbReference>
<dbReference type="InterPro" id="IPR002302">
    <property type="entry name" value="Leu-tRNA-ligase"/>
</dbReference>
<dbReference type="InterPro" id="IPR025709">
    <property type="entry name" value="Leu_tRNA-synth_edit"/>
</dbReference>
<dbReference type="InterPro" id="IPR013155">
    <property type="entry name" value="M/V/L/I-tRNA-synth_anticd-bd"/>
</dbReference>
<dbReference type="InterPro" id="IPR015413">
    <property type="entry name" value="Methionyl/Leucyl_tRNA_Synth"/>
</dbReference>
<dbReference type="InterPro" id="IPR014729">
    <property type="entry name" value="Rossmann-like_a/b/a_fold"/>
</dbReference>
<dbReference type="InterPro" id="IPR009080">
    <property type="entry name" value="tRNAsynth_Ia_anticodon-bd"/>
</dbReference>
<dbReference type="InterPro" id="IPR009008">
    <property type="entry name" value="Val/Leu/Ile-tRNA-synth_edit"/>
</dbReference>
<dbReference type="NCBIfam" id="TIGR00396">
    <property type="entry name" value="leuS_bact"/>
    <property type="match status" value="1"/>
</dbReference>
<dbReference type="PANTHER" id="PTHR43740:SF2">
    <property type="entry name" value="LEUCINE--TRNA LIGASE, MITOCHONDRIAL"/>
    <property type="match status" value="1"/>
</dbReference>
<dbReference type="PANTHER" id="PTHR43740">
    <property type="entry name" value="LEUCYL-TRNA SYNTHETASE"/>
    <property type="match status" value="1"/>
</dbReference>
<dbReference type="Pfam" id="PF08264">
    <property type="entry name" value="Anticodon_1"/>
    <property type="match status" value="1"/>
</dbReference>
<dbReference type="Pfam" id="PF00133">
    <property type="entry name" value="tRNA-synt_1"/>
    <property type="match status" value="2"/>
</dbReference>
<dbReference type="Pfam" id="PF13603">
    <property type="entry name" value="tRNA-synt_1_2"/>
    <property type="match status" value="1"/>
</dbReference>
<dbReference type="Pfam" id="PF09334">
    <property type="entry name" value="tRNA-synt_1g"/>
    <property type="match status" value="1"/>
</dbReference>
<dbReference type="PRINTS" id="PR00985">
    <property type="entry name" value="TRNASYNTHLEU"/>
</dbReference>
<dbReference type="SUPFAM" id="SSF47323">
    <property type="entry name" value="Anticodon-binding domain of a subclass of class I aminoacyl-tRNA synthetases"/>
    <property type="match status" value="1"/>
</dbReference>
<dbReference type="SUPFAM" id="SSF52374">
    <property type="entry name" value="Nucleotidylyl transferase"/>
    <property type="match status" value="1"/>
</dbReference>
<dbReference type="SUPFAM" id="SSF50677">
    <property type="entry name" value="ValRS/IleRS/LeuRS editing domain"/>
    <property type="match status" value="1"/>
</dbReference>
<dbReference type="PROSITE" id="PS00178">
    <property type="entry name" value="AA_TRNA_LIGASE_I"/>
    <property type="match status" value="1"/>
</dbReference>